<gene>
    <name evidence="1" type="primary">fusA</name>
    <name type="ordered locus">Amet_4481</name>
</gene>
<protein>
    <recommendedName>
        <fullName evidence="1">Elongation factor G</fullName>
        <shortName evidence="1">EF-G</shortName>
    </recommendedName>
</protein>
<keyword id="KW-0963">Cytoplasm</keyword>
<keyword id="KW-0251">Elongation factor</keyword>
<keyword id="KW-0342">GTP-binding</keyword>
<keyword id="KW-0547">Nucleotide-binding</keyword>
<keyword id="KW-0648">Protein biosynthesis</keyword>
<keyword id="KW-1185">Reference proteome</keyword>
<evidence type="ECO:0000255" key="1">
    <source>
        <dbReference type="HAMAP-Rule" id="MF_00054"/>
    </source>
</evidence>
<organism>
    <name type="scientific">Alkaliphilus metalliredigens (strain QYMF)</name>
    <dbReference type="NCBI Taxonomy" id="293826"/>
    <lineage>
        <taxon>Bacteria</taxon>
        <taxon>Bacillati</taxon>
        <taxon>Bacillota</taxon>
        <taxon>Clostridia</taxon>
        <taxon>Peptostreptococcales</taxon>
        <taxon>Natronincolaceae</taxon>
        <taxon>Alkaliphilus</taxon>
    </lineage>
</organism>
<dbReference type="EMBL" id="CP000724">
    <property type="protein sequence ID" value="ABR50553.1"/>
    <property type="molecule type" value="Genomic_DNA"/>
</dbReference>
<dbReference type="RefSeq" id="WP_012065444.1">
    <property type="nucleotide sequence ID" value="NC_009633.1"/>
</dbReference>
<dbReference type="SMR" id="A6TWI5"/>
<dbReference type="STRING" id="293826.Amet_4481"/>
<dbReference type="KEGG" id="amt:Amet_4481"/>
<dbReference type="eggNOG" id="COG0480">
    <property type="taxonomic scope" value="Bacteria"/>
</dbReference>
<dbReference type="HOGENOM" id="CLU_002794_4_1_9"/>
<dbReference type="OrthoDB" id="9804431at2"/>
<dbReference type="Proteomes" id="UP000001572">
    <property type="component" value="Chromosome"/>
</dbReference>
<dbReference type="GO" id="GO:0005737">
    <property type="term" value="C:cytoplasm"/>
    <property type="evidence" value="ECO:0007669"/>
    <property type="project" value="UniProtKB-SubCell"/>
</dbReference>
<dbReference type="GO" id="GO:0005525">
    <property type="term" value="F:GTP binding"/>
    <property type="evidence" value="ECO:0007669"/>
    <property type="project" value="UniProtKB-UniRule"/>
</dbReference>
<dbReference type="GO" id="GO:0003924">
    <property type="term" value="F:GTPase activity"/>
    <property type="evidence" value="ECO:0007669"/>
    <property type="project" value="InterPro"/>
</dbReference>
<dbReference type="GO" id="GO:0003746">
    <property type="term" value="F:translation elongation factor activity"/>
    <property type="evidence" value="ECO:0007669"/>
    <property type="project" value="UniProtKB-UniRule"/>
</dbReference>
<dbReference type="GO" id="GO:0032790">
    <property type="term" value="P:ribosome disassembly"/>
    <property type="evidence" value="ECO:0007669"/>
    <property type="project" value="TreeGrafter"/>
</dbReference>
<dbReference type="CDD" id="cd01886">
    <property type="entry name" value="EF-G"/>
    <property type="match status" value="1"/>
</dbReference>
<dbReference type="CDD" id="cd16262">
    <property type="entry name" value="EFG_III"/>
    <property type="match status" value="1"/>
</dbReference>
<dbReference type="CDD" id="cd01434">
    <property type="entry name" value="EFG_mtEFG1_IV"/>
    <property type="match status" value="1"/>
</dbReference>
<dbReference type="CDD" id="cd03713">
    <property type="entry name" value="EFG_mtEFG_C"/>
    <property type="match status" value="1"/>
</dbReference>
<dbReference type="CDD" id="cd04088">
    <property type="entry name" value="EFG_mtEFG_II"/>
    <property type="match status" value="1"/>
</dbReference>
<dbReference type="FunFam" id="2.40.30.10:FF:000006">
    <property type="entry name" value="Elongation factor G"/>
    <property type="match status" value="1"/>
</dbReference>
<dbReference type="FunFam" id="3.30.230.10:FF:000003">
    <property type="entry name" value="Elongation factor G"/>
    <property type="match status" value="1"/>
</dbReference>
<dbReference type="FunFam" id="3.30.70.240:FF:000001">
    <property type="entry name" value="Elongation factor G"/>
    <property type="match status" value="1"/>
</dbReference>
<dbReference type="FunFam" id="3.30.70.870:FF:000001">
    <property type="entry name" value="Elongation factor G"/>
    <property type="match status" value="1"/>
</dbReference>
<dbReference type="FunFam" id="3.40.50.300:FF:000029">
    <property type="entry name" value="Elongation factor G"/>
    <property type="match status" value="1"/>
</dbReference>
<dbReference type="Gene3D" id="3.30.230.10">
    <property type="match status" value="1"/>
</dbReference>
<dbReference type="Gene3D" id="3.30.70.240">
    <property type="match status" value="1"/>
</dbReference>
<dbReference type="Gene3D" id="3.30.70.870">
    <property type="entry name" value="Elongation Factor G (Translational Gtpase), domain 3"/>
    <property type="match status" value="1"/>
</dbReference>
<dbReference type="Gene3D" id="3.40.50.300">
    <property type="entry name" value="P-loop containing nucleotide triphosphate hydrolases"/>
    <property type="match status" value="1"/>
</dbReference>
<dbReference type="Gene3D" id="2.40.30.10">
    <property type="entry name" value="Translation factors"/>
    <property type="match status" value="1"/>
</dbReference>
<dbReference type="HAMAP" id="MF_00054_B">
    <property type="entry name" value="EF_G_EF_2_B"/>
    <property type="match status" value="1"/>
</dbReference>
<dbReference type="InterPro" id="IPR041095">
    <property type="entry name" value="EFG_II"/>
</dbReference>
<dbReference type="InterPro" id="IPR009022">
    <property type="entry name" value="EFG_III"/>
</dbReference>
<dbReference type="InterPro" id="IPR035647">
    <property type="entry name" value="EFG_III/V"/>
</dbReference>
<dbReference type="InterPro" id="IPR047872">
    <property type="entry name" value="EFG_IV"/>
</dbReference>
<dbReference type="InterPro" id="IPR035649">
    <property type="entry name" value="EFG_V"/>
</dbReference>
<dbReference type="InterPro" id="IPR000640">
    <property type="entry name" value="EFG_V-like"/>
</dbReference>
<dbReference type="InterPro" id="IPR004161">
    <property type="entry name" value="EFTu-like_2"/>
</dbReference>
<dbReference type="InterPro" id="IPR031157">
    <property type="entry name" value="G_TR_CS"/>
</dbReference>
<dbReference type="InterPro" id="IPR027417">
    <property type="entry name" value="P-loop_NTPase"/>
</dbReference>
<dbReference type="InterPro" id="IPR020568">
    <property type="entry name" value="Ribosomal_Su5_D2-typ_SF"/>
</dbReference>
<dbReference type="InterPro" id="IPR014721">
    <property type="entry name" value="Ribsml_uS5_D2-typ_fold_subgr"/>
</dbReference>
<dbReference type="InterPro" id="IPR005225">
    <property type="entry name" value="Small_GTP-bd"/>
</dbReference>
<dbReference type="InterPro" id="IPR000795">
    <property type="entry name" value="T_Tr_GTP-bd_dom"/>
</dbReference>
<dbReference type="InterPro" id="IPR009000">
    <property type="entry name" value="Transl_B-barrel_sf"/>
</dbReference>
<dbReference type="InterPro" id="IPR004540">
    <property type="entry name" value="Transl_elong_EFG/EF2"/>
</dbReference>
<dbReference type="InterPro" id="IPR005517">
    <property type="entry name" value="Transl_elong_EFG/EF2_IV"/>
</dbReference>
<dbReference type="NCBIfam" id="TIGR00484">
    <property type="entry name" value="EF-G"/>
    <property type="match status" value="1"/>
</dbReference>
<dbReference type="NCBIfam" id="NF009381">
    <property type="entry name" value="PRK12740.1-5"/>
    <property type="match status" value="1"/>
</dbReference>
<dbReference type="NCBIfam" id="TIGR00231">
    <property type="entry name" value="small_GTP"/>
    <property type="match status" value="1"/>
</dbReference>
<dbReference type="PANTHER" id="PTHR43261:SF1">
    <property type="entry name" value="RIBOSOME-RELEASING FACTOR 2, MITOCHONDRIAL"/>
    <property type="match status" value="1"/>
</dbReference>
<dbReference type="PANTHER" id="PTHR43261">
    <property type="entry name" value="TRANSLATION ELONGATION FACTOR G-RELATED"/>
    <property type="match status" value="1"/>
</dbReference>
<dbReference type="Pfam" id="PF00679">
    <property type="entry name" value="EFG_C"/>
    <property type="match status" value="1"/>
</dbReference>
<dbReference type="Pfam" id="PF14492">
    <property type="entry name" value="EFG_III"/>
    <property type="match status" value="1"/>
</dbReference>
<dbReference type="Pfam" id="PF03764">
    <property type="entry name" value="EFG_IV"/>
    <property type="match status" value="1"/>
</dbReference>
<dbReference type="Pfam" id="PF00009">
    <property type="entry name" value="GTP_EFTU"/>
    <property type="match status" value="1"/>
</dbReference>
<dbReference type="Pfam" id="PF03144">
    <property type="entry name" value="GTP_EFTU_D2"/>
    <property type="match status" value="1"/>
</dbReference>
<dbReference type="PRINTS" id="PR00315">
    <property type="entry name" value="ELONGATNFCT"/>
</dbReference>
<dbReference type="SMART" id="SM00838">
    <property type="entry name" value="EFG_C"/>
    <property type="match status" value="1"/>
</dbReference>
<dbReference type="SMART" id="SM00889">
    <property type="entry name" value="EFG_IV"/>
    <property type="match status" value="1"/>
</dbReference>
<dbReference type="SUPFAM" id="SSF54980">
    <property type="entry name" value="EF-G C-terminal domain-like"/>
    <property type="match status" value="2"/>
</dbReference>
<dbReference type="SUPFAM" id="SSF52540">
    <property type="entry name" value="P-loop containing nucleoside triphosphate hydrolases"/>
    <property type="match status" value="1"/>
</dbReference>
<dbReference type="SUPFAM" id="SSF54211">
    <property type="entry name" value="Ribosomal protein S5 domain 2-like"/>
    <property type="match status" value="1"/>
</dbReference>
<dbReference type="SUPFAM" id="SSF50447">
    <property type="entry name" value="Translation proteins"/>
    <property type="match status" value="1"/>
</dbReference>
<dbReference type="PROSITE" id="PS00301">
    <property type="entry name" value="G_TR_1"/>
    <property type="match status" value="1"/>
</dbReference>
<dbReference type="PROSITE" id="PS51722">
    <property type="entry name" value="G_TR_2"/>
    <property type="match status" value="1"/>
</dbReference>
<reference key="1">
    <citation type="journal article" date="2016" name="Genome Announc.">
        <title>Complete genome sequence of Alkaliphilus metalliredigens strain QYMF, an alkaliphilic and metal-reducing bacterium isolated from borax-contaminated leachate ponds.</title>
        <authorList>
            <person name="Hwang C."/>
            <person name="Copeland A."/>
            <person name="Lucas S."/>
            <person name="Lapidus A."/>
            <person name="Barry K."/>
            <person name="Detter J.C."/>
            <person name="Glavina Del Rio T."/>
            <person name="Hammon N."/>
            <person name="Israni S."/>
            <person name="Dalin E."/>
            <person name="Tice H."/>
            <person name="Pitluck S."/>
            <person name="Chertkov O."/>
            <person name="Brettin T."/>
            <person name="Bruce D."/>
            <person name="Han C."/>
            <person name="Schmutz J."/>
            <person name="Larimer F."/>
            <person name="Land M.L."/>
            <person name="Hauser L."/>
            <person name="Kyrpides N."/>
            <person name="Mikhailova N."/>
            <person name="Ye Q."/>
            <person name="Zhou J."/>
            <person name="Richardson P."/>
            <person name="Fields M.W."/>
        </authorList>
    </citation>
    <scope>NUCLEOTIDE SEQUENCE [LARGE SCALE GENOMIC DNA]</scope>
    <source>
        <strain>QYMF</strain>
    </source>
</reference>
<accession>A6TWI5</accession>
<comment type="function">
    <text evidence="1">Catalyzes the GTP-dependent ribosomal translocation step during translation elongation. During this step, the ribosome changes from the pre-translocational (PRE) to the post-translocational (POST) state as the newly formed A-site-bound peptidyl-tRNA and P-site-bound deacylated tRNA move to the P and E sites, respectively. Catalyzes the coordinated movement of the two tRNA molecules, the mRNA and conformational changes in the ribosome.</text>
</comment>
<comment type="subcellular location">
    <subcellularLocation>
        <location evidence="1">Cytoplasm</location>
    </subcellularLocation>
</comment>
<comment type="similarity">
    <text evidence="1">Belongs to the TRAFAC class translation factor GTPase superfamily. Classic translation factor GTPase family. EF-G/EF-2 subfamily.</text>
</comment>
<proteinExistence type="inferred from homology"/>
<name>EFG_ALKMQ</name>
<sequence length="689" mass="76079">MPREFPLERTRNIGIMAHIDAGKTTTTERILFYSGTTRKLGETHEGASQMDWMDQEKERGITITSAATTCQWLNHRVNIIDTPGHVDFTVEVERSLRVLDGAVAVFCAKGGVEPQSETVWRQGDKYKVPRMAFVNKMDRQGADFFNVMQMMIDRLAANPVAVQLPIGSEEEFTGIIDLVKMEATIYLDDVGQETKIVEIPEELKELAVEYREKLVEAVSETSEELMMKYLEGEALTEEELVKGIRQGTINVQITPVYCGSAYKNKGVQLLLDGVVAYMPSPLDIPAISGIDADTQEEIERHADDSEPFSALAFKIMADPYVGKLAFFRVYSGTLDAGSYVLNSTKGKKERIGRILQMHANTRAEIPTVYAGDIAAAVGLKDTTTGDTLCDPTDAVILESMVFPEPVISVAIEPKTKAGQEKMGVALQKLAEEDPTFKTYTDEETSQTIIAGMGELHLEIIVDRMMREFKVEATVGKPQVAYKETITKAVEVEAKYAKQSGGRGQYGHVKIRMIPQEPGIGYEFTNSTVGGSIPREYVPAVDQGIQGAMVNGILAGYEVVDFKVELYDGSYHDVDSSEMAFKIAGSMAFKEGMRKASPALLEPYMKVEVVTPEDYMGDVIGDLNSRRGQIEGMESRSGAQVIKAFVPLSEMFGYSTDLRSKTQGRATYSMHFNHYAQVPASISEKIMTGK</sequence>
<feature type="chain" id="PRO_1000057384" description="Elongation factor G">
    <location>
        <begin position="1"/>
        <end position="689"/>
    </location>
</feature>
<feature type="domain" description="tr-type G">
    <location>
        <begin position="8"/>
        <end position="282"/>
    </location>
</feature>
<feature type="binding site" evidence="1">
    <location>
        <begin position="17"/>
        <end position="24"/>
    </location>
    <ligand>
        <name>GTP</name>
        <dbReference type="ChEBI" id="CHEBI:37565"/>
    </ligand>
</feature>
<feature type="binding site" evidence="1">
    <location>
        <begin position="81"/>
        <end position="85"/>
    </location>
    <ligand>
        <name>GTP</name>
        <dbReference type="ChEBI" id="CHEBI:37565"/>
    </ligand>
</feature>
<feature type="binding site" evidence="1">
    <location>
        <begin position="135"/>
        <end position="138"/>
    </location>
    <ligand>
        <name>GTP</name>
        <dbReference type="ChEBI" id="CHEBI:37565"/>
    </ligand>
</feature>